<proteinExistence type="inferred from homology"/>
<comment type="function">
    <text evidence="1">Catalyzes the interconversion of ornithine to glutamate semialdehyde.</text>
</comment>
<comment type="catalytic activity">
    <reaction evidence="1">
        <text>a 2-oxocarboxylate + L-ornithine = L-glutamate 5-semialdehyde + an L-alpha-amino acid</text>
        <dbReference type="Rhea" id="RHEA:13877"/>
        <dbReference type="ChEBI" id="CHEBI:35179"/>
        <dbReference type="ChEBI" id="CHEBI:46911"/>
        <dbReference type="ChEBI" id="CHEBI:58066"/>
        <dbReference type="ChEBI" id="CHEBI:59869"/>
        <dbReference type="EC" id="2.6.1.13"/>
    </reaction>
</comment>
<comment type="cofactor">
    <cofactor evidence="1">
        <name>pyridoxal 5'-phosphate</name>
        <dbReference type="ChEBI" id="CHEBI:597326"/>
    </cofactor>
</comment>
<comment type="pathway">
    <text evidence="1">Amino-acid biosynthesis; L-proline biosynthesis; L-glutamate 5-semialdehyde from L-ornithine: step 1/1.</text>
</comment>
<comment type="subcellular location">
    <subcellularLocation>
        <location evidence="1">Cytoplasm</location>
    </subcellularLocation>
</comment>
<comment type="similarity">
    <text evidence="1">Belongs to the class-III pyridoxal-phosphate-dependent aminotransferase family. OAT subfamily.</text>
</comment>
<protein>
    <recommendedName>
        <fullName evidence="1">Ornithine aminotransferase 1</fullName>
        <shortName evidence="1">OAT 1</shortName>
        <ecNumber evidence="1">2.6.1.13</ecNumber>
    </recommendedName>
    <alternativeName>
        <fullName evidence="1">Ornithine--oxo-acid aminotransferase 1</fullName>
    </alternativeName>
</protein>
<name>OAT1_STAAM</name>
<dbReference type="EC" id="2.6.1.13" evidence="1"/>
<dbReference type="EMBL" id="BA000017">
    <property type="protein sequence ID" value="BAB56347.1"/>
    <property type="molecule type" value="Genomic_DNA"/>
</dbReference>
<dbReference type="SMR" id="P60295"/>
<dbReference type="KEGG" id="sav:SAV0185"/>
<dbReference type="HOGENOM" id="CLU_016922_10_1_9"/>
<dbReference type="PhylomeDB" id="P60295"/>
<dbReference type="UniPathway" id="UPA00098">
    <property type="reaction ID" value="UER00358"/>
</dbReference>
<dbReference type="Proteomes" id="UP000002481">
    <property type="component" value="Chromosome"/>
</dbReference>
<dbReference type="GO" id="GO:0005737">
    <property type="term" value="C:cytoplasm"/>
    <property type="evidence" value="ECO:0007669"/>
    <property type="project" value="UniProtKB-SubCell"/>
</dbReference>
<dbReference type="GO" id="GO:0042802">
    <property type="term" value="F:identical protein binding"/>
    <property type="evidence" value="ECO:0007669"/>
    <property type="project" value="TreeGrafter"/>
</dbReference>
<dbReference type="GO" id="GO:0004587">
    <property type="term" value="F:ornithine aminotransferase activity"/>
    <property type="evidence" value="ECO:0007669"/>
    <property type="project" value="UniProtKB-UniRule"/>
</dbReference>
<dbReference type="GO" id="GO:0030170">
    <property type="term" value="F:pyridoxal phosphate binding"/>
    <property type="evidence" value="ECO:0007669"/>
    <property type="project" value="UniProtKB-UniRule"/>
</dbReference>
<dbReference type="GO" id="GO:0006525">
    <property type="term" value="P:arginine metabolic process"/>
    <property type="evidence" value="ECO:0007669"/>
    <property type="project" value="InterPro"/>
</dbReference>
<dbReference type="GO" id="GO:0055129">
    <property type="term" value="P:L-proline biosynthetic process"/>
    <property type="evidence" value="ECO:0007669"/>
    <property type="project" value="UniProtKB-UniRule"/>
</dbReference>
<dbReference type="CDD" id="cd00610">
    <property type="entry name" value="OAT_like"/>
    <property type="match status" value="1"/>
</dbReference>
<dbReference type="FunFam" id="3.40.640.10:FF:000011">
    <property type="entry name" value="Ornithine aminotransferase"/>
    <property type="match status" value="1"/>
</dbReference>
<dbReference type="Gene3D" id="3.90.1150.10">
    <property type="entry name" value="Aspartate Aminotransferase, domain 1"/>
    <property type="match status" value="1"/>
</dbReference>
<dbReference type="Gene3D" id="3.40.640.10">
    <property type="entry name" value="Type I PLP-dependent aspartate aminotransferase-like (Major domain)"/>
    <property type="match status" value="1"/>
</dbReference>
<dbReference type="HAMAP" id="MF_01689">
    <property type="entry name" value="Ornith_aminotrans_3"/>
    <property type="match status" value="1"/>
</dbReference>
<dbReference type="InterPro" id="IPR004636">
    <property type="entry name" value="AcOrn/SuccOrn_fam"/>
</dbReference>
<dbReference type="InterPro" id="IPR005814">
    <property type="entry name" value="Aminotrans_3"/>
</dbReference>
<dbReference type="InterPro" id="IPR049704">
    <property type="entry name" value="Aminotrans_3_PPA_site"/>
</dbReference>
<dbReference type="InterPro" id="IPR050103">
    <property type="entry name" value="Class-III_PLP-dep_AT"/>
</dbReference>
<dbReference type="InterPro" id="IPR010164">
    <property type="entry name" value="Orn_aminotrans"/>
</dbReference>
<dbReference type="InterPro" id="IPR034757">
    <property type="entry name" value="Ornith_aminotrans_bact"/>
</dbReference>
<dbReference type="InterPro" id="IPR015424">
    <property type="entry name" value="PyrdxlP-dep_Trfase"/>
</dbReference>
<dbReference type="InterPro" id="IPR015421">
    <property type="entry name" value="PyrdxlP-dep_Trfase_major"/>
</dbReference>
<dbReference type="InterPro" id="IPR015422">
    <property type="entry name" value="PyrdxlP-dep_Trfase_small"/>
</dbReference>
<dbReference type="NCBIfam" id="TIGR00707">
    <property type="entry name" value="argD"/>
    <property type="match status" value="1"/>
</dbReference>
<dbReference type="NCBIfam" id="TIGR01885">
    <property type="entry name" value="Orn_aminotrans"/>
    <property type="match status" value="1"/>
</dbReference>
<dbReference type="NCBIfam" id="NF002325">
    <property type="entry name" value="PRK01278.1"/>
    <property type="match status" value="1"/>
</dbReference>
<dbReference type="PANTHER" id="PTHR11986">
    <property type="entry name" value="AMINOTRANSFERASE CLASS III"/>
    <property type="match status" value="1"/>
</dbReference>
<dbReference type="PANTHER" id="PTHR11986:SF18">
    <property type="entry name" value="ORNITHINE AMINOTRANSFERASE, MITOCHONDRIAL"/>
    <property type="match status" value="1"/>
</dbReference>
<dbReference type="Pfam" id="PF00202">
    <property type="entry name" value="Aminotran_3"/>
    <property type="match status" value="1"/>
</dbReference>
<dbReference type="PIRSF" id="PIRSF000521">
    <property type="entry name" value="Transaminase_4ab_Lys_Orn"/>
    <property type="match status" value="1"/>
</dbReference>
<dbReference type="SUPFAM" id="SSF53383">
    <property type="entry name" value="PLP-dependent transferases"/>
    <property type="match status" value="1"/>
</dbReference>
<dbReference type="PROSITE" id="PS00600">
    <property type="entry name" value="AA_TRANSFER_CLASS_3"/>
    <property type="match status" value="1"/>
</dbReference>
<keyword id="KW-0028">Amino-acid biosynthesis</keyword>
<keyword id="KW-0032">Aminotransferase</keyword>
<keyword id="KW-0963">Cytoplasm</keyword>
<keyword id="KW-0641">Proline biosynthesis</keyword>
<keyword id="KW-0663">Pyridoxal phosphate</keyword>
<keyword id="KW-0808">Transferase</keyword>
<feature type="chain" id="PRO_0000112782" description="Ornithine aminotransferase 1">
    <location>
        <begin position="1"/>
        <end position="394"/>
    </location>
</feature>
<feature type="modified residue" description="N6-(pyridoxal phosphate)lysine" evidence="1">
    <location>
        <position position="252"/>
    </location>
</feature>
<organism>
    <name type="scientific">Staphylococcus aureus (strain Mu50 / ATCC 700699)</name>
    <dbReference type="NCBI Taxonomy" id="158878"/>
    <lineage>
        <taxon>Bacteria</taxon>
        <taxon>Bacillati</taxon>
        <taxon>Bacillota</taxon>
        <taxon>Bacilli</taxon>
        <taxon>Bacillales</taxon>
        <taxon>Staphylococcaceae</taxon>
        <taxon>Staphylococcus</taxon>
    </lineage>
</organism>
<sequence length="394" mass="43057">MNSIIELTDYYSSNNYAPLKLVISKGKGVKVWDTDGKQYIDCISGFSVANQGHCHPTIVKAMTEQASKLSIISRVLYSDNLGKWEEKICHLAKKDKVLSLNSGTEAVEAAIKIARKWGSEVKGITDGQVEIIAMNNNFHGRTLGSLSLSNHDAYKAGFHPLLQGTTTVDFGDIEQLTQAISPNTAAIILEPIQGEGGVNIPPKGYIQAVRQLCDKHQILMIADEIQVGLGRTGKWFAMEWEQVVPDIYILGKALGGGLYPVSAVLANNDVMRVLTPGTHGSTFGGNPLAIAISTAALDVLKDEQLVERSERLGSFLLKALLQLKHPSIKEIRGRGLFIGIELNTDAAPFVDQLIQRGILCKDTHRTIIRLSPPLVIDKEEIHQIVAAFQDVFKN</sequence>
<reference key="1">
    <citation type="journal article" date="2001" name="Lancet">
        <title>Whole genome sequencing of meticillin-resistant Staphylococcus aureus.</title>
        <authorList>
            <person name="Kuroda M."/>
            <person name="Ohta T."/>
            <person name="Uchiyama I."/>
            <person name="Baba T."/>
            <person name="Yuzawa H."/>
            <person name="Kobayashi I."/>
            <person name="Cui L."/>
            <person name="Oguchi A."/>
            <person name="Aoki K."/>
            <person name="Nagai Y."/>
            <person name="Lian J.-Q."/>
            <person name="Ito T."/>
            <person name="Kanamori M."/>
            <person name="Matsumaru H."/>
            <person name="Maruyama A."/>
            <person name="Murakami H."/>
            <person name="Hosoyama A."/>
            <person name="Mizutani-Ui Y."/>
            <person name="Takahashi N.K."/>
            <person name="Sawano T."/>
            <person name="Inoue R."/>
            <person name="Kaito C."/>
            <person name="Sekimizu K."/>
            <person name="Hirakawa H."/>
            <person name="Kuhara S."/>
            <person name="Goto S."/>
            <person name="Yabuzaki J."/>
            <person name="Kanehisa M."/>
            <person name="Yamashita A."/>
            <person name="Oshima K."/>
            <person name="Furuya K."/>
            <person name="Yoshino C."/>
            <person name="Shiba T."/>
            <person name="Hattori M."/>
            <person name="Ogasawara N."/>
            <person name="Hayashi H."/>
            <person name="Hiramatsu K."/>
        </authorList>
    </citation>
    <scope>NUCLEOTIDE SEQUENCE [LARGE SCALE GENOMIC DNA]</scope>
    <source>
        <strain>Mu50 / ATCC 700699</strain>
    </source>
</reference>
<evidence type="ECO:0000255" key="1">
    <source>
        <dbReference type="HAMAP-Rule" id="MF_01689"/>
    </source>
</evidence>
<accession>P60295</accession>
<accession>Q99X36</accession>
<gene>
    <name evidence="1" type="primary">rocD1</name>
    <name type="ordered locus">SAV0185</name>
</gene>